<dbReference type="EC" id="3.6.4.-" evidence="1"/>
<dbReference type="EMBL" id="CP000758">
    <property type="protein sequence ID" value="ABS13930.1"/>
    <property type="molecule type" value="Genomic_DNA"/>
</dbReference>
<dbReference type="RefSeq" id="WP_012091335.1">
    <property type="nucleotide sequence ID" value="NC_009667.1"/>
</dbReference>
<dbReference type="SMR" id="A6WY76"/>
<dbReference type="STRING" id="439375.Oant_1213"/>
<dbReference type="KEGG" id="oan:Oant_1213"/>
<dbReference type="PATRIC" id="fig|439375.7.peg.1268"/>
<dbReference type="eggNOG" id="COG2255">
    <property type="taxonomic scope" value="Bacteria"/>
</dbReference>
<dbReference type="HOGENOM" id="CLU_055599_1_0_5"/>
<dbReference type="PhylomeDB" id="A6WY76"/>
<dbReference type="Proteomes" id="UP000002301">
    <property type="component" value="Chromosome 1"/>
</dbReference>
<dbReference type="GO" id="GO:0005737">
    <property type="term" value="C:cytoplasm"/>
    <property type="evidence" value="ECO:0007669"/>
    <property type="project" value="UniProtKB-SubCell"/>
</dbReference>
<dbReference type="GO" id="GO:0048476">
    <property type="term" value="C:Holliday junction resolvase complex"/>
    <property type="evidence" value="ECO:0007669"/>
    <property type="project" value="UniProtKB-UniRule"/>
</dbReference>
<dbReference type="GO" id="GO:0005524">
    <property type="term" value="F:ATP binding"/>
    <property type="evidence" value="ECO:0007669"/>
    <property type="project" value="UniProtKB-UniRule"/>
</dbReference>
<dbReference type="GO" id="GO:0016887">
    <property type="term" value="F:ATP hydrolysis activity"/>
    <property type="evidence" value="ECO:0007669"/>
    <property type="project" value="InterPro"/>
</dbReference>
<dbReference type="GO" id="GO:0000400">
    <property type="term" value="F:four-way junction DNA binding"/>
    <property type="evidence" value="ECO:0007669"/>
    <property type="project" value="UniProtKB-UniRule"/>
</dbReference>
<dbReference type="GO" id="GO:0009378">
    <property type="term" value="F:four-way junction helicase activity"/>
    <property type="evidence" value="ECO:0007669"/>
    <property type="project" value="InterPro"/>
</dbReference>
<dbReference type="GO" id="GO:0006310">
    <property type="term" value="P:DNA recombination"/>
    <property type="evidence" value="ECO:0007669"/>
    <property type="project" value="UniProtKB-UniRule"/>
</dbReference>
<dbReference type="GO" id="GO:0006281">
    <property type="term" value="P:DNA repair"/>
    <property type="evidence" value="ECO:0007669"/>
    <property type="project" value="UniProtKB-UniRule"/>
</dbReference>
<dbReference type="CDD" id="cd00009">
    <property type="entry name" value="AAA"/>
    <property type="match status" value="1"/>
</dbReference>
<dbReference type="Gene3D" id="1.10.8.60">
    <property type="match status" value="1"/>
</dbReference>
<dbReference type="Gene3D" id="3.40.50.300">
    <property type="entry name" value="P-loop containing nucleotide triphosphate hydrolases"/>
    <property type="match status" value="1"/>
</dbReference>
<dbReference type="Gene3D" id="1.10.10.10">
    <property type="entry name" value="Winged helix-like DNA-binding domain superfamily/Winged helix DNA-binding domain"/>
    <property type="match status" value="1"/>
</dbReference>
<dbReference type="HAMAP" id="MF_00016">
    <property type="entry name" value="DNA_HJ_migration_RuvB"/>
    <property type="match status" value="1"/>
</dbReference>
<dbReference type="InterPro" id="IPR003593">
    <property type="entry name" value="AAA+_ATPase"/>
</dbReference>
<dbReference type="InterPro" id="IPR041445">
    <property type="entry name" value="AAA_lid_4"/>
</dbReference>
<dbReference type="InterPro" id="IPR000641">
    <property type="entry name" value="CbxX/CfxQ"/>
</dbReference>
<dbReference type="InterPro" id="IPR004605">
    <property type="entry name" value="DNA_helicase_Holl-junc_RuvB"/>
</dbReference>
<dbReference type="InterPro" id="IPR027417">
    <property type="entry name" value="P-loop_NTPase"/>
</dbReference>
<dbReference type="InterPro" id="IPR008824">
    <property type="entry name" value="RuvB-like_N"/>
</dbReference>
<dbReference type="InterPro" id="IPR008823">
    <property type="entry name" value="RuvB_C"/>
</dbReference>
<dbReference type="InterPro" id="IPR036388">
    <property type="entry name" value="WH-like_DNA-bd_sf"/>
</dbReference>
<dbReference type="InterPro" id="IPR036390">
    <property type="entry name" value="WH_DNA-bd_sf"/>
</dbReference>
<dbReference type="NCBIfam" id="NF000868">
    <property type="entry name" value="PRK00080.1"/>
    <property type="match status" value="1"/>
</dbReference>
<dbReference type="NCBIfam" id="TIGR00635">
    <property type="entry name" value="ruvB"/>
    <property type="match status" value="1"/>
</dbReference>
<dbReference type="PANTHER" id="PTHR42848">
    <property type="match status" value="1"/>
</dbReference>
<dbReference type="PANTHER" id="PTHR42848:SF1">
    <property type="entry name" value="HOLLIDAY JUNCTION BRANCH MIGRATION COMPLEX SUBUNIT RUVB"/>
    <property type="match status" value="1"/>
</dbReference>
<dbReference type="Pfam" id="PF17864">
    <property type="entry name" value="AAA_lid_4"/>
    <property type="match status" value="1"/>
</dbReference>
<dbReference type="Pfam" id="PF05491">
    <property type="entry name" value="RuvB_C"/>
    <property type="match status" value="1"/>
</dbReference>
<dbReference type="Pfam" id="PF05496">
    <property type="entry name" value="RuvB_N"/>
    <property type="match status" value="1"/>
</dbReference>
<dbReference type="PRINTS" id="PR00819">
    <property type="entry name" value="CBXCFQXSUPER"/>
</dbReference>
<dbReference type="SMART" id="SM00382">
    <property type="entry name" value="AAA"/>
    <property type="match status" value="1"/>
</dbReference>
<dbReference type="SUPFAM" id="SSF52540">
    <property type="entry name" value="P-loop containing nucleoside triphosphate hydrolases"/>
    <property type="match status" value="1"/>
</dbReference>
<dbReference type="SUPFAM" id="SSF46785">
    <property type="entry name" value="Winged helix' DNA-binding domain"/>
    <property type="match status" value="1"/>
</dbReference>
<accession>A6WY76</accession>
<comment type="function">
    <text evidence="1">The RuvA-RuvB-RuvC complex processes Holliday junction (HJ) DNA during genetic recombination and DNA repair, while the RuvA-RuvB complex plays an important role in the rescue of blocked DNA replication forks via replication fork reversal (RFR). RuvA specifically binds to HJ cruciform DNA, conferring on it an open structure. The RuvB hexamer acts as an ATP-dependent pump, pulling dsDNA into and through the RuvAB complex. RuvB forms 2 homohexamers on either side of HJ DNA bound by 1 or 2 RuvA tetramers; 4 subunits per hexamer contact DNA at a time. Coordinated motions by a converter formed by DNA-disengaged RuvB subunits stimulates ATP hydrolysis and nucleotide exchange. Immobilization of the converter enables RuvB to convert the ATP-contained energy into a lever motion, pulling 2 nucleotides of DNA out of the RuvA tetramer per ATP hydrolyzed, thus driving DNA branch migration. The RuvB motors rotate together with the DNA substrate, which together with the progressing nucleotide cycle form the mechanistic basis for DNA recombination by continuous HJ branch migration. Branch migration allows RuvC to scan DNA until it finds its consensus sequence, where it cleaves and resolves cruciform DNA.</text>
</comment>
<comment type="catalytic activity">
    <reaction evidence="1">
        <text>ATP + H2O = ADP + phosphate + H(+)</text>
        <dbReference type="Rhea" id="RHEA:13065"/>
        <dbReference type="ChEBI" id="CHEBI:15377"/>
        <dbReference type="ChEBI" id="CHEBI:15378"/>
        <dbReference type="ChEBI" id="CHEBI:30616"/>
        <dbReference type="ChEBI" id="CHEBI:43474"/>
        <dbReference type="ChEBI" id="CHEBI:456216"/>
    </reaction>
</comment>
<comment type="subunit">
    <text evidence="1">Homohexamer. Forms an RuvA(8)-RuvB(12)-Holliday junction (HJ) complex. HJ DNA is sandwiched between 2 RuvA tetramers; dsDNA enters through RuvA and exits via RuvB. An RuvB hexamer assembles on each DNA strand where it exits the tetramer. Each RuvB hexamer is contacted by two RuvA subunits (via domain III) on 2 adjacent RuvB subunits; this complex drives branch migration. In the full resolvosome a probable DNA-RuvA(4)-RuvB(12)-RuvC(2) complex forms which resolves the HJ.</text>
</comment>
<comment type="subcellular location">
    <subcellularLocation>
        <location evidence="1">Cytoplasm</location>
    </subcellularLocation>
</comment>
<comment type="domain">
    <text evidence="1">Has 3 domains, the large (RuvB-L) and small ATPase (RuvB-S) domains and the C-terminal head (RuvB-H) domain. The head domain binds DNA, while the ATPase domains jointly bind ATP, ADP or are empty depending on the state of the subunit in the translocation cycle. During a single DNA translocation step the structure of each domain remains the same, but their relative positions change.</text>
</comment>
<comment type="similarity">
    <text evidence="1">Belongs to the RuvB family.</text>
</comment>
<evidence type="ECO:0000255" key="1">
    <source>
        <dbReference type="HAMAP-Rule" id="MF_00016"/>
    </source>
</evidence>
<reference key="1">
    <citation type="journal article" date="2011" name="J. Bacteriol.">
        <title>Genome of Ochrobactrum anthropi ATCC 49188 T, a versatile opportunistic pathogen and symbiont of several eukaryotic hosts.</title>
        <authorList>
            <person name="Chain P.S."/>
            <person name="Lang D.M."/>
            <person name="Comerci D.J."/>
            <person name="Malfatti S.A."/>
            <person name="Vergez L.M."/>
            <person name="Shin M."/>
            <person name="Ugalde R.A."/>
            <person name="Garcia E."/>
            <person name="Tolmasky M.E."/>
        </authorList>
    </citation>
    <scope>NUCLEOTIDE SEQUENCE [LARGE SCALE GENOMIC DNA]</scope>
    <source>
        <strain>ATCC 49188 / DSM 6882 / CCUG 24695 / JCM 21032 / LMG 3331 / NBRC 15819 / NCTC 12168 / Alc 37</strain>
    </source>
</reference>
<organism>
    <name type="scientific">Brucella anthropi (strain ATCC 49188 / DSM 6882 / CCUG 24695 / JCM 21032 / LMG 3331 / NBRC 15819 / NCTC 12168 / Alc 37)</name>
    <name type="common">Ochrobactrum anthropi</name>
    <dbReference type="NCBI Taxonomy" id="439375"/>
    <lineage>
        <taxon>Bacteria</taxon>
        <taxon>Pseudomonadati</taxon>
        <taxon>Pseudomonadota</taxon>
        <taxon>Alphaproteobacteria</taxon>
        <taxon>Hyphomicrobiales</taxon>
        <taxon>Brucellaceae</taxon>
        <taxon>Brucella/Ochrobactrum group</taxon>
        <taxon>Brucella</taxon>
    </lineage>
</organism>
<keyword id="KW-0067">ATP-binding</keyword>
<keyword id="KW-0963">Cytoplasm</keyword>
<keyword id="KW-0227">DNA damage</keyword>
<keyword id="KW-0233">DNA recombination</keyword>
<keyword id="KW-0234">DNA repair</keyword>
<keyword id="KW-0238">DNA-binding</keyword>
<keyword id="KW-0378">Hydrolase</keyword>
<keyword id="KW-0547">Nucleotide-binding</keyword>
<keyword id="KW-1185">Reference proteome</keyword>
<protein>
    <recommendedName>
        <fullName evidence="1">Holliday junction branch migration complex subunit RuvB</fullName>
        <ecNumber evidence="1">3.6.4.-</ecNumber>
    </recommendedName>
</protein>
<name>RUVB_BRUA4</name>
<proteinExistence type="inferred from homology"/>
<feature type="chain" id="PRO_1000001436" description="Holliday junction branch migration complex subunit RuvB">
    <location>
        <begin position="1"/>
        <end position="346"/>
    </location>
</feature>
<feature type="region of interest" description="Large ATPase domain (RuvB-L)" evidence="1">
    <location>
        <begin position="1"/>
        <end position="181"/>
    </location>
</feature>
<feature type="region of interest" description="Small ATPAse domain (RuvB-S)" evidence="1">
    <location>
        <begin position="182"/>
        <end position="252"/>
    </location>
</feature>
<feature type="region of interest" description="Head domain (RuvB-H)" evidence="1">
    <location>
        <begin position="255"/>
        <end position="346"/>
    </location>
</feature>
<feature type="binding site" evidence="1">
    <location>
        <position position="20"/>
    </location>
    <ligand>
        <name>ATP</name>
        <dbReference type="ChEBI" id="CHEBI:30616"/>
    </ligand>
</feature>
<feature type="binding site" evidence="1">
    <location>
        <position position="21"/>
    </location>
    <ligand>
        <name>ATP</name>
        <dbReference type="ChEBI" id="CHEBI:30616"/>
    </ligand>
</feature>
<feature type="binding site" evidence="1">
    <location>
        <position position="62"/>
    </location>
    <ligand>
        <name>ATP</name>
        <dbReference type="ChEBI" id="CHEBI:30616"/>
    </ligand>
</feature>
<feature type="binding site" evidence="1">
    <location>
        <position position="65"/>
    </location>
    <ligand>
        <name>ATP</name>
        <dbReference type="ChEBI" id="CHEBI:30616"/>
    </ligand>
</feature>
<feature type="binding site" evidence="1">
    <location>
        <position position="66"/>
    </location>
    <ligand>
        <name>ATP</name>
        <dbReference type="ChEBI" id="CHEBI:30616"/>
    </ligand>
</feature>
<feature type="binding site" evidence="1">
    <location>
        <position position="66"/>
    </location>
    <ligand>
        <name>Mg(2+)</name>
        <dbReference type="ChEBI" id="CHEBI:18420"/>
    </ligand>
</feature>
<feature type="binding site" evidence="1">
    <location>
        <position position="67"/>
    </location>
    <ligand>
        <name>ATP</name>
        <dbReference type="ChEBI" id="CHEBI:30616"/>
    </ligand>
</feature>
<feature type="binding site" evidence="1">
    <location>
        <begin position="128"/>
        <end position="130"/>
    </location>
    <ligand>
        <name>ATP</name>
        <dbReference type="ChEBI" id="CHEBI:30616"/>
    </ligand>
</feature>
<feature type="binding site" evidence="1">
    <location>
        <position position="171"/>
    </location>
    <ligand>
        <name>ATP</name>
        <dbReference type="ChEBI" id="CHEBI:30616"/>
    </ligand>
</feature>
<feature type="binding site" evidence="1">
    <location>
        <position position="181"/>
    </location>
    <ligand>
        <name>ATP</name>
        <dbReference type="ChEBI" id="CHEBI:30616"/>
    </ligand>
</feature>
<feature type="binding site" evidence="1">
    <location>
        <position position="218"/>
    </location>
    <ligand>
        <name>ATP</name>
        <dbReference type="ChEBI" id="CHEBI:30616"/>
    </ligand>
</feature>
<feature type="binding site" evidence="1">
    <location>
        <position position="291"/>
    </location>
    <ligand>
        <name>DNA</name>
        <dbReference type="ChEBI" id="CHEBI:16991"/>
    </ligand>
</feature>
<feature type="binding site" evidence="1">
    <location>
        <position position="310"/>
    </location>
    <ligand>
        <name>DNA</name>
        <dbReference type="ChEBI" id="CHEBI:16991"/>
    </ligand>
</feature>
<feature type="binding site" evidence="1">
    <location>
        <position position="315"/>
    </location>
    <ligand>
        <name>DNA</name>
        <dbReference type="ChEBI" id="CHEBI:16991"/>
    </ligand>
</feature>
<gene>
    <name evidence="1" type="primary">ruvB</name>
    <name type="ordered locus">Oant_1213</name>
</gene>
<sequence length="346" mass="38196">MSDRNPLIDADRRVDEDNTLRPQTLDDFVGQAAARANLKVFIEAAKVRGEALDHVLFVGPPGLGKTTLAQIMAKELGVNFRSTSGPVIAKAGDLAALLTNLEERDVLFIDEIHRLSPAVEEILYPAMEDFQLDLIIGEGPAARSVKIDLAKFTLVAATTRLGLLTTPLRDRFGIPTRLNFYTVEELEYIVRRGARIMQMGISPDGALEVARRSRGTPRIAGRLLRRVRDFALVAGADVIDRKIADEALSRLEVDNRGLDQLDRRYLNIIARNFGGGPVGIETIAAGLSEPRDAIEDIIEPYLIQQGFLQRTPRGRVLTAVAWQHLGLPAPAEIIQQSQYGLFMEDE</sequence>